<keyword id="KW-1185">Reference proteome</keyword>
<reference key="1">
    <citation type="journal article" date="1989" name="J. Bacteriol.">
        <title>envM genes of Salmonella typhimurium and Escherichia coli.</title>
        <authorList>
            <person name="Turnowsky F."/>
            <person name="Fuchs K."/>
            <person name="Jeschek C."/>
            <person name="Hoegenauer G."/>
        </authorList>
    </citation>
    <scope>NUCLEOTIDE SEQUENCE [GENOMIC DNA]</scope>
    <source>
        <strain>AG701</strain>
    </source>
</reference>
<reference key="2">
    <citation type="journal article" date="2001" name="Nature">
        <title>Complete genome sequence of Salmonella enterica serovar Typhimurium LT2.</title>
        <authorList>
            <person name="McClelland M."/>
            <person name="Sanderson K.E."/>
            <person name="Spieth J."/>
            <person name="Clifton S.W."/>
            <person name="Latreille P."/>
            <person name="Courtney L."/>
            <person name="Porwollik S."/>
            <person name="Ali J."/>
            <person name="Dante M."/>
            <person name="Du F."/>
            <person name="Hou S."/>
            <person name="Layman D."/>
            <person name="Leonard S."/>
            <person name="Nguyen C."/>
            <person name="Scott K."/>
            <person name="Holmes A."/>
            <person name="Grewal N."/>
            <person name="Mulvaney E."/>
            <person name="Ryan E."/>
            <person name="Sun H."/>
            <person name="Florea L."/>
            <person name="Miller W."/>
            <person name="Stoneking T."/>
            <person name="Nhan M."/>
            <person name="Waterston R."/>
            <person name="Wilson R.K."/>
        </authorList>
    </citation>
    <scope>NUCLEOTIDE SEQUENCE [LARGE SCALE GENOMIC DNA]</scope>
    <source>
        <strain>LT2 / SGSC1412 / ATCC 700720</strain>
    </source>
</reference>
<organism>
    <name type="scientific">Salmonella typhimurium (strain LT2 / SGSC1412 / ATCC 700720)</name>
    <dbReference type="NCBI Taxonomy" id="99287"/>
    <lineage>
        <taxon>Bacteria</taxon>
        <taxon>Pseudomonadati</taxon>
        <taxon>Pseudomonadota</taxon>
        <taxon>Gammaproteobacteria</taxon>
        <taxon>Enterobacterales</taxon>
        <taxon>Enterobacteriaceae</taxon>
        <taxon>Salmonella</taxon>
    </lineage>
</organism>
<name>YCJE_SALTY</name>
<accession>P16656</accession>
<feature type="chain" id="PRO_0000205369" description="Uncharacterized protein YcjE">
    <location>
        <begin position="1"/>
        <end position="99"/>
    </location>
</feature>
<gene>
    <name type="primary">ycjE</name>
    <name type="ordered locus">STM1699</name>
</gene>
<protein>
    <recommendedName>
        <fullName>Uncharacterized protein YcjE</fullName>
    </recommendedName>
</protein>
<sequence>MSITSLIGEVNHLDEYSGFLQNLYLSGGKRIAIVLAIRPGVSGWMRRTLHQLVYCTVGPVPLDSLICQFGPGECSKSSGTSLPCGFRTSPAGDSGGKIA</sequence>
<proteinExistence type="predicted"/>
<dbReference type="EMBL" id="M31806">
    <property type="protein sequence ID" value="AAA27058.1"/>
    <property type="molecule type" value="Genomic_DNA"/>
</dbReference>
<dbReference type="EMBL" id="AE006468">
    <property type="protein sequence ID" value="AAL20617.1"/>
    <property type="molecule type" value="Genomic_DNA"/>
</dbReference>
<dbReference type="PIR" id="A43729">
    <property type="entry name" value="A43729"/>
</dbReference>
<dbReference type="RefSeq" id="NP_460658.1">
    <property type="nucleotide sequence ID" value="NC_003197.2"/>
</dbReference>
<dbReference type="RefSeq" id="WP_010989025.1">
    <property type="nucleotide sequence ID" value="NC_003197.2"/>
</dbReference>
<dbReference type="STRING" id="99287.STM1699"/>
<dbReference type="PaxDb" id="99287-STM1699"/>
<dbReference type="GeneID" id="1253218"/>
<dbReference type="KEGG" id="stm:STM1699"/>
<dbReference type="HOGENOM" id="CLU_183073_0_0_6"/>
<dbReference type="BioCyc" id="SENT99287:STM1699-MONOMER"/>
<dbReference type="Proteomes" id="UP000001014">
    <property type="component" value="Chromosome"/>
</dbReference>